<comment type="function">
    <text evidence="3 6 7">Acts as a modulatory subunit rather than a functional channel. Unlike other P2XRs members, P2RX6 does not seem to form functional homotrimers (PubMed:10037762). P2RX6 requires the presence of P2RX4 or P2RX2 to become functional at the cell surface (PubMed:10864944). P2RX6 can be translocated to the nucleus and functions as a nuclear regulator of post-transcriptional modifications in neurons (By similarity).</text>
</comment>
<comment type="catalytic activity">
    <reaction evidence="2">
        <text>Ca(2+)(in) = Ca(2+)(out)</text>
        <dbReference type="Rhea" id="RHEA:29671"/>
        <dbReference type="ChEBI" id="CHEBI:29108"/>
    </reaction>
</comment>
<comment type="subunit">
    <text evidence="3 6 7 8 9 10 12 13">Monomer (PubMed:15044628). Unlike P2RXs, P2RX6 does not seem to form homotrimers (PubMed:10037762, PubMed:12077178, PubMed:15657042). Forms heterotrimer with P2RX2 (PubMed:10864944, PubMed:17449665). Forms heterotrimer with P2RX4; functional differences between homomeric P2RX4 and P2RX4/6 heterotrimer are minor (PubMed:12077178). Forms a P2RX2/P2RX4/P2RX6 heterotrimer (PubMed:24815693). Interacts with SF3A1; resulting in a reduction of the splicing activity (By similarity).</text>
</comment>
<comment type="interaction">
    <interactant intactId="EBI-9511515">
        <id>P51579</id>
    </interactant>
    <interactant intactId="EBI-9511543">
        <id>P49653</id>
        <label>P2rx2</label>
    </interactant>
    <organismsDiffer>false</organismsDiffer>
    <experiments>4</experiments>
</comment>
<comment type="subcellular location">
    <subcellularLocation>
        <location evidence="9 11">Cell membrane</location>
        <topology evidence="5">Multi-pass membrane protein</topology>
    </subcellularLocation>
    <subcellularLocation>
        <location evidence="8 11">Endoplasmic reticulum</location>
    </subcellularLocation>
    <subcellularLocation>
        <location evidence="3">Nucleus</location>
    </subcellularLocation>
    <subcellularLocation>
        <location evidence="3">Nucleus inner membrane</location>
        <topology evidence="5">Multi-pass membrane protein</topology>
    </subcellularLocation>
    <text evidence="3 8 9 11">Monomers remain anchored to the endoplasmic reticulum (ER) membrane by the hydrophobic N-terminal end (PubMed:12077178, PubMed:15044628, PubMed:16452399). Heteromerization of P2RX6 subunits with either P2RX2 or P2RX4 subunits guides the P2RX6 subunit to the plasma membrane (PubMed:16452399). Retention of P2RX6 subunit in the ER allows it to reach the nucleus (PubMed:16452399). In neurons, mainly expressed in the cell body of the hippocampal neurons (By similarity).</text>
</comment>
<comment type="domain">
    <text evidence="11">An uncharged region within the N terminus of the P2RX6 subunit inhibits its assembly and exit from the endoplasmic reticulum.</text>
</comment>
<comment type="domain">
    <text evidence="4">The P2RX6 subunit lacks nine residues in the left flipper, a flexible loop structure, which is a key element in the activation of P2RXs.</text>
</comment>
<comment type="PTM">
    <text evidence="9">N-glycosylated. N-linked glycosylation can affect trafficking to the membrane and function.</text>
</comment>
<comment type="similarity">
    <text evidence="14">Belongs to the P2X receptor family.</text>
</comment>
<comment type="sequence caution" evidence="14">
    <conflict type="erroneous initiation">
        <sequence resource="EMBL-CDS" id="CAA63053"/>
    </conflict>
    <text>Truncated N-terminus.</text>
</comment>
<comment type="sequence caution" evidence="14">
    <conflict type="erroneous initiation">
        <sequence resource="EMBL-CDS" id="CAA66044"/>
    </conflict>
    <text>Truncated N-terminus.</text>
</comment>
<gene>
    <name type="primary">P2rx6</name>
    <name type="synonym">P2rxl1</name>
</gene>
<feature type="chain" id="PRO_0000161559" description="P2X purinoceptor 6">
    <location>
        <begin position="1"/>
        <end position="389"/>
    </location>
</feature>
<feature type="topological domain" description="Cytoplasmic" evidence="5">
    <location>
        <begin position="1"/>
        <end position="41"/>
    </location>
</feature>
<feature type="transmembrane region" description="Helical; Name=1" evidence="5">
    <location>
        <begin position="42"/>
        <end position="62"/>
    </location>
</feature>
<feature type="topological domain" description="Extracellular" evidence="5">
    <location>
        <begin position="63"/>
        <end position="335"/>
    </location>
</feature>
<feature type="transmembrane region" description="Helical; Name=2" evidence="5">
    <location>
        <begin position="336"/>
        <end position="356"/>
    </location>
</feature>
<feature type="topological domain" description="Cytoplasmic" evidence="5">
    <location>
        <begin position="357"/>
        <end position="389"/>
    </location>
</feature>
<feature type="modified residue" description="Phosphotyrosine" evidence="2">
    <location>
        <position position="66"/>
    </location>
</feature>
<feature type="glycosylation site" description="N-linked (GlcNAc...) asparagine" evidence="5">
    <location>
        <position position="167"/>
    </location>
</feature>
<feature type="glycosylation site" description="N-linked (GlcNAc...) asparagine" evidence="5">
    <location>
        <position position="197"/>
    </location>
</feature>
<feature type="glycosylation site" description="N-linked (GlcNAc...) asparagine" evidence="5">
    <location>
        <position position="212"/>
    </location>
</feature>
<feature type="disulfide bond" evidence="1">
    <location>
        <begin position="129"/>
        <end position="179"/>
    </location>
</feature>
<feature type="disulfide bond" evidence="1">
    <location>
        <begin position="140"/>
        <end position="163"/>
    </location>
</feature>
<feature type="disulfide bond" evidence="1">
    <location>
        <begin position="146"/>
        <end position="173"/>
    </location>
</feature>
<feature type="disulfide bond" evidence="1">
    <location>
        <begin position="230"/>
        <end position="240"/>
    </location>
</feature>
<feature type="disulfide bond" evidence="1">
    <location>
        <begin position="274"/>
        <end position="283"/>
    </location>
</feature>
<feature type="mutagenesis site" description="Promotes the formation of homotrimers; when associated with K-21." evidence="11">
    <original>S</original>
    <variation>K</variation>
    <location>
        <position position="13"/>
    </location>
</feature>
<feature type="mutagenesis site" description="Promotes the formation of homotrimers; when associated with K-13." evidence="11">
    <original>S</original>
    <variation>K</variation>
    <location>
        <position position="21"/>
    </location>
</feature>
<evidence type="ECO:0000250" key="1">
    <source>
        <dbReference type="UniProtKB" id="F8W463"/>
    </source>
</evidence>
<evidence type="ECO:0000250" key="2">
    <source>
        <dbReference type="UniProtKB" id="O15547"/>
    </source>
</evidence>
<evidence type="ECO:0000250" key="3">
    <source>
        <dbReference type="UniProtKB" id="O54803"/>
    </source>
</evidence>
<evidence type="ECO:0000250" key="4">
    <source>
        <dbReference type="UniProtKB" id="P51577"/>
    </source>
</evidence>
<evidence type="ECO:0000255" key="5"/>
<evidence type="ECO:0000269" key="6">
    <source>
    </source>
</evidence>
<evidence type="ECO:0000269" key="7">
    <source>
    </source>
</evidence>
<evidence type="ECO:0000269" key="8">
    <source>
    </source>
</evidence>
<evidence type="ECO:0000269" key="9">
    <source>
    </source>
</evidence>
<evidence type="ECO:0000269" key="10">
    <source>
    </source>
</evidence>
<evidence type="ECO:0000269" key="11">
    <source>
    </source>
</evidence>
<evidence type="ECO:0000269" key="12">
    <source>
    </source>
</evidence>
<evidence type="ECO:0000269" key="13">
    <source>
    </source>
</evidence>
<evidence type="ECO:0000305" key="14"/>
<keyword id="KW-1003">Cell membrane</keyword>
<keyword id="KW-1015">Disulfide bond</keyword>
<keyword id="KW-0256">Endoplasmic reticulum</keyword>
<keyword id="KW-0325">Glycoprotein</keyword>
<keyword id="KW-0407">Ion channel</keyword>
<keyword id="KW-0406">Ion transport</keyword>
<keyword id="KW-1071">Ligand-gated ion channel</keyword>
<keyword id="KW-0472">Membrane</keyword>
<keyword id="KW-0539">Nucleus</keyword>
<keyword id="KW-0597">Phosphoprotein</keyword>
<keyword id="KW-0675">Receptor</keyword>
<keyword id="KW-1185">Reference proteome</keyword>
<keyword id="KW-0812">Transmembrane</keyword>
<keyword id="KW-1133">Transmembrane helix</keyword>
<keyword id="KW-0813">Transport</keyword>
<proteinExistence type="evidence at protein level"/>
<sequence>MQLQPAGTGSMASAVAAALVSWGFLDYKTEKYVMTRNCWVGISQRLLQLGVVVYVIGWALLAKKGYQEWDMDPQISVITKLKGVSVTQVKELEKRLWDVADFVRPSQGENVFFLVTNFLVTPAQVQGRCPEHPSVPLANCWADEDCPEGEMGTYSHGIKTGQCVAFNGTHRTCEIWSWCPVESSAVPRKPLLAQAKNFTLFIKNTVTFNKFNFSRTNALDTWDNTYFKYCLYDSLSSPYCPVFRIGDLVAMTGGDFEDLALLGGAVGINIHWDCNLDTKGSDCSPQYSFQLQERGYNFRTANYWWAASGVESRSLLKLYGIRFDILVTGQAGKFALIPTAITVGTGAAWLGMVTFLCDLLLLYVDREAGFYWRTKYEEARAPKATTNSA</sequence>
<dbReference type="EMBL" id="X97376">
    <property type="protein sequence ID" value="CAA66044.1"/>
    <property type="status" value="ALT_INIT"/>
    <property type="molecule type" value="mRNA"/>
</dbReference>
<dbReference type="EMBL" id="AABR07034750">
    <property type="status" value="NOT_ANNOTATED_CDS"/>
    <property type="molecule type" value="Genomic_DNA"/>
</dbReference>
<dbReference type="EMBL" id="CH473999">
    <property type="protein sequence ID" value="EDL77896.1"/>
    <property type="molecule type" value="Genomic_DNA"/>
</dbReference>
<dbReference type="EMBL" id="X92070">
    <property type="protein sequence ID" value="CAA63053.1"/>
    <property type="status" value="ALT_INIT"/>
    <property type="molecule type" value="mRNA"/>
</dbReference>
<dbReference type="PIR" id="JC4843">
    <property type="entry name" value="JC4843"/>
</dbReference>
<dbReference type="RefSeq" id="NP_036853.2">
    <property type="nucleotide sequence ID" value="NM_012721.2"/>
</dbReference>
<dbReference type="SMR" id="P51579"/>
<dbReference type="FunCoup" id="P51579">
    <property type="interactions" value="73"/>
</dbReference>
<dbReference type="IntAct" id="P51579">
    <property type="interactions" value="2"/>
</dbReference>
<dbReference type="MINT" id="P51579"/>
<dbReference type="STRING" id="10116.ENSRNOP00000002558"/>
<dbReference type="BindingDB" id="P51579"/>
<dbReference type="ChEMBL" id="CHEMBL2122"/>
<dbReference type="DrugCentral" id="P51579"/>
<dbReference type="GuidetoPHARMACOLOGY" id="483"/>
<dbReference type="GlyCosmos" id="P51579">
    <property type="glycosylation" value="3 sites, No reported glycans"/>
</dbReference>
<dbReference type="GlyGen" id="P51579">
    <property type="glycosylation" value="4 sites"/>
</dbReference>
<dbReference type="PhosphoSitePlus" id="P51579"/>
<dbReference type="PaxDb" id="10116-ENSRNOP00000002558"/>
<dbReference type="Ensembl" id="ENSRNOT00000002558.7">
    <property type="protein sequence ID" value="ENSRNOP00000002558.5"/>
    <property type="gene ID" value="ENSRNOG00000001873.7"/>
</dbReference>
<dbReference type="GeneID" id="25041"/>
<dbReference type="KEGG" id="rno:25041"/>
<dbReference type="AGR" id="RGD:3243"/>
<dbReference type="CTD" id="9127"/>
<dbReference type="RGD" id="3243">
    <property type="gene designation" value="P2rx6"/>
</dbReference>
<dbReference type="eggNOG" id="ENOG502R480">
    <property type="taxonomic scope" value="Eukaryota"/>
</dbReference>
<dbReference type="GeneTree" id="ENSGT01020000230351"/>
<dbReference type="InParanoid" id="P51579"/>
<dbReference type="OMA" id="ATMVCDL"/>
<dbReference type="OrthoDB" id="494673at2759"/>
<dbReference type="PhylomeDB" id="P51579"/>
<dbReference type="TreeFam" id="TF328633"/>
<dbReference type="Reactome" id="R-RNO-139853">
    <property type="pathway name" value="Elevation of cytosolic Ca2+ levels"/>
</dbReference>
<dbReference type="Reactome" id="R-RNO-418346">
    <property type="pathway name" value="Platelet homeostasis"/>
</dbReference>
<dbReference type="PRO" id="PR:P51579"/>
<dbReference type="Proteomes" id="UP000002494">
    <property type="component" value="Chromosome 11"/>
</dbReference>
<dbReference type="Proteomes" id="UP000234681">
    <property type="component" value="Chromosome 11"/>
</dbReference>
<dbReference type="Bgee" id="ENSRNOG00000001873">
    <property type="expression patterns" value="Expressed in quadriceps femoris and 9 other cell types or tissues"/>
</dbReference>
<dbReference type="GO" id="GO:0030054">
    <property type="term" value="C:cell junction"/>
    <property type="evidence" value="ECO:0000266"/>
    <property type="project" value="RGD"/>
</dbReference>
<dbReference type="GO" id="GO:0005737">
    <property type="term" value="C:cytoplasm"/>
    <property type="evidence" value="ECO:0000266"/>
    <property type="project" value="RGD"/>
</dbReference>
<dbReference type="GO" id="GO:0043197">
    <property type="term" value="C:dendritic spine"/>
    <property type="evidence" value="ECO:0000314"/>
    <property type="project" value="RGD"/>
</dbReference>
<dbReference type="GO" id="GO:0005789">
    <property type="term" value="C:endoplasmic reticulum membrane"/>
    <property type="evidence" value="ECO:0000314"/>
    <property type="project" value="UniProtKB"/>
</dbReference>
<dbReference type="GO" id="GO:0098978">
    <property type="term" value="C:glutamatergic synapse"/>
    <property type="evidence" value="ECO:0000314"/>
    <property type="project" value="SynGO"/>
</dbReference>
<dbReference type="GO" id="GO:0043025">
    <property type="term" value="C:neuronal cell body"/>
    <property type="evidence" value="ECO:0000314"/>
    <property type="project" value="RGD"/>
</dbReference>
<dbReference type="GO" id="GO:0005637">
    <property type="term" value="C:nuclear inner membrane"/>
    <property type="evidence" value="ECO:0007669"/>
    <property type="project" value="UniProtKB-SubCell"/>
</dbReference>
<dbReference type="GO" id="GO:0005634">
    <property type="term" value="C:nucleus"/>
    <property type="evidence" value="ECO:0000266"/>
    <property type="project" value="RGD"/>
</dbReference>
<dbReference type="GO" id="GO:0098688">
    <property type="term" value="C:parallel fiber to Purkinje cell synapse"/>
    <property type="evidence" value="ECO:0000314"/>
    <property type="project" value="SynGO"/>
</dbReference>
<dbReference type="GO" id="GO:0005886">
    <property type="term" value="C:plasma membrane"/>
    <property type="evidence" value="ECO:0000318"/>
    <property type="project" value="GO_Central"/>
</dbReference>
<dbReference type="GO" id="GO:0099634">
    <property type="term" value="C:postsynaptic specialization membrane"/>
    <property type="evidence" value="ECO:0000314"/>
    <property type="project" value="SynGO"/>
</dbReference>
<dbReference type="GO" id="GO:0043235">
    <property type="term" value="C:receptor complex"/>
    <property type="evidence" value="ECO:0000266"/>
    <property type="project" value="RGD"/>
</dbReference>
<dbReference type="GO" id="GO:0005524">
    <property type="term" value="F:ATP binding"/>
    <property type="evidence" value="ECO:0007669"/>
    <property type="project" value="InterPro"/>
</dbReference>
<dbReference type="GO" id="GO:0004931">
    <property type="term" value="F:extracellularly ATP-gated monoatomic cation channel activity"/>
    <property type="evidence" value="ECO:0000314"/>
    <property type="project" value="RGD"/>
</dbReference>
<dbReference type="GO" id="GO:0044877">
    <property type="term" value="F:protein-containing complex binding"/>
    <property type="evidence" value="ECO:0000314"/>
    <property type="project" value="RGD"/>
</dbReference>
<dbReference type="GO" id="GO:0001614">
    <property type="term" value="F:purinergic nucleotide receptor activity"/>
    <property type="evidence" value="ECO:0007669"/>
    <property type="project" value="InterPro"/>
</dbReference>
<dbReference type="GO" id="GO:0070588">
    <property type="term" value="P:calcium ion transmembrane transport"/>
    <property type="evidence" value="ECO:0000318"/>
    <property type="project" value="GO_Central"/>
</dbReference>
<dbReference type="GO" id="GO:0033198">
    <property type="term" value="P:response to ATP"/>
    <property type="evidence" value="ECO:0007669"/>
    <property type="project" value="InterPro"/>
</dbReference>
<dbReference type="FunFam" id="2.60.490.10:FF:000001">
    <property type="entry name" value="P2X purinoceptor"/>
    <property type="match status" value="1"/>
</dbReference>
<dbReference type="Gene3D" id="1.10.287.940">
    <property type="entry name" value="atp-gated p2x4 ion channel"/>
    <property type="match status" value="1"/>
</dbReference>
<dbReference type="Gene3D" id="2.60.490.10">
    <property type="entry name" value="atp-gated p2x4 ion channel domain"/>
    <property type="match status" value="1"/>
</dbReference>
<dbReference type="InterPro" id="IPR003049">
    <property type="entry name" value="P2X6_purnocptor"/>
</dbReference>
<dbReference type="InterPro" id="IPR027309">
    <property type="entry name" value="P2X_extracellular_dom_sf"/>
</dbReference>
<dbReference type="InterPro" id="IPR001429">
    <property type="entry name" value="P2X_purnocptor"/>
</dbReference>
<dbReference type="InterPro" id="IPR053792">
    <property type="entry name" value="P2X_RECEPTOR_CS"/>
</dbReference>
<dbReference type="NCBIfam" id="TIGR00863">
    <property type="entry name" value="P2X"/>
    <property type="match status" value="1"/>
</dbReference>
<dbReference type="PANTHER" id="PTHR10125">
    <property type="entry name" value="P2X PURINOCEPTOR"/>
    <property type="match status" value="1"/>
</dbReference>
<dbReference type="PANTHER" id="PTHR10125:SF21">
    <property type="entry name" value="P2X PURINOCEPTOR 6"/>
    <property type="match status" value="1"/>
</dbReference>
<dbReference type="Pfam" id="PF00864">
    <property type="entry name" value="P2X_receptor"/>
    <property type="match status" value="1"/>
</dbReference>
<dbReference type="PIRSF" id="PIRSF005713">
    <property type="entry name" value="P2X_purinoceptor"/>
    <property type="match status" value="1"/>
</dbReference>
<dbReference type="PRINTS" id="PR01313">
    <property type="entry name" value="P2X6RECEPTOR"/>
</dbReference>
<dbReference type="PRINTS" id="PR01307">
    <property type="entry name" value="P2XRECEPTOR"/>
</dbReference>
<dbReference type="PROSITE" id="PS01212">
    <property type="entry name" value="P2X_RECEPTOR"/>
    <property type="match status" value="1"/>
</dbReference>
<organism>
    <name type="scientific">Rattus norvegicus</name>
    <name type="common">Rat</name>
    <dbReference type="NCBI Taxonomy" id="10116"/>
    <lineage>
        <taxon>Eukaryota</taxon>
        <taxon>Metazoa</taxon>
        <taxon>Chordata</taxon>
        <taxon>Craniata</taxon>
        <taxon>Vertebrata</taxon>
        <taxon>Euteleostomi</taxon>
        <taxon>Mammalia</taxon>
        <taxon>Eutheria</taxon>
        <taxon>Euarchontoglires</taxon>
        <taxon>Glires</taxon>
        <taxon>Rodentia</taxon>
        <taxon>Myomorpha</taxon>
        <taxon>Muroidea</taxon>
        <taxon>Muridae</taxon>
        <taxon>Murinae</taxon>
        <taxon>Rattus</taxon>
    </lineage>
</organism>
<accession>P51579</accession>
<accession>R9PXR5</accession>
<reference key="1">
    <citation type="journal article" date="1996" name="Biochem. Biophys. Res. Commun.">
        <title>Cloning and tissue distribution of a novel P2X receptor from rat brain.</title>
        <authorList>
            <person name="Soto F."/>
            <person name="Garcia-Guzman M."/>
            <person name="Karschin C."/>
            <person name="Stuehmer W."/>
        </authorList>
    </citation>
    <scope>NUCLEOTIDE SEQUENCE [MRNA]</scope>
    <source>
        <strain>Sprague-Dawley</strain>
        <tissue>Brain</tissue>
    </source>
</reference>
<reference key="2">
    <citation type="journal article" date="2004" name="Nature">
        <title>Genome sequence of the Brown Norway rat yields insights into mammalian evolution.</title>
        <authorList>
            <person name="Gibbs R.A."/>
            <person name="Weinstock G.M."/>
            <person name="Metzker M.L."/>
            <person name="Muzny D.M."/>
            <person name="Sodergren E.J."/>
            <person name="Scherer S."/>
            <person name="Scott G."/>
            <person name="Steffen D."/>
            <person name="Worley K.C."/>
            <person name="Burch P.E."/>
            <person name="Okwuonu G."/>
            <person name="Hines S."/>
            <person name="Lewis L."/>
            <person name="Deramo C."/>
            <person name="Delgado O."/>
            <person name="Dugan-Rocha S."/>
            <person name="Miner G."/>
            <person name="Morgan M."/>
            <person name="Hawes A."/>
            <person name="Gill R."/>
            <person name="Holt R.A."/>
            <person name="Adams M.D."/>
            <person name="Amanatides P.G."/>
            <person name="Baden-Tillson H."/>
            <person name="Barnstead M."/>
            <person name="Chin S."/>
            <person name="Evans C.A."/>
            <person name="Ferriera S."/>
            <person name="Fosler C."/>
            <person name="Glodek A."/>
            <person name="Gu Z."/>
            <person name="Jennings D."/>
            <person name="Kraft C.L."/>
            <person name="Nguyen T."/>
            <person name="Pfannkoch C.M."/>
            <person name="Sitter C."/>
            <person name="Sutton G.G."/>
            <person name="Venter J.C."/>
            <person name="Woodage T."/>
            <person name="Smith D."/>
            <person name="Lee H.-M."/>
            <person name="Gustafson E."/>
            <person name="Cahill P."/>
            <person name="Kana A."/>
            <person name="Doucette-Stamm L."/>
            <person name="Weinstock K."/>
            <person name="Fechtel K."/>
            <person name="Weiss R.B."/>
            <person name="Dunn D.M."/>
            <person name="Green E.D."/>
            <person name="Blakesley R.W."/>
            <person name="Bouffard G.G."/>
            <person name="De Jong P.J."/>
            <person name="Osoegawa K."/>
            <person name="Zhu B."/>
            <person name="Marra M."/>
            <person name="Schein J."/>
            <person name="Bosdet I."/>
            <person name="Fjell C."/>
            <person name="Jones S."/>
            <person name="Krzywinski M."/>
            <person name="Mathewson C."/>
            <person name="Siddiqui A."/>
            <person name="Wye N."/>
            <person name="McPherson J."/>
            <person name="Zhao S."/>
            <person name="Fraser C.M."/>
            <person name="Shetty J."/>
            <person name="Shatsman S."/>
            <person name="Geer K."/>
            <person name="Chen Y."/>
            <person name="Abramzon S."/>
            <person name="Nierman W.C."/>
            <person name="Havlak P.H."/>
            <person name="Chen R."/>
            <person name="Durbin K.J."/>
            <person name="Egan A."/>
            <person name="Ren Y."/>
            <person name="Song X.-Z."/>
            <person name="Li B."/>
            <person name="Liu Y."/>
            <person name="Qin X."/>
            <person name="Cawley S."/>
            <person name="Cooney A.J."/>
            <person name="D'Souza L.M."/>
            <person name="Martin K."/>
            <person name="Wu J.Q."/>
            <person name="Gonzalez-Garay M.L."/>
            <person name="Jackson A.R."/>
            <person name="Kalafus K.J."/>
            <person name="McLeod M.P."/>
            <person name="Milosavljevic A."/>
            <person name="Virk D."/>
            <person name="Volkov A."/>
            <person name="Wheeler D.A."/>
            <person name="Zhang Z."/>
            <person name="Bailey J.A."/>
            <person name="Eichler E.E."/>
            <person name="Tuzun E."/>
            <person name="Birney E."/>
            <person name="Mongin E."/>
            <person name="Ureta-Vidal A."/>
            <person name="Woodwark C."/>
            <person name="Zdobnov E."/>
            <person name="Bork P."/>
            <person name="Suyama M."/>
            <person name="Torrents D."/>
            <person name="Alexandersson M."/>
            <person name="Trask B.J."/>
            <person name="Young J.M."/>
            <person name="Huang H."/>
            <person name="Wang H."/>
            <person name="Xing H."/>
            <person name="Daniels S."/>
            <person name="Gietzen D."/>
            <person name="Schmidt J."/>
            <person name="Stevens K."/>
            <person name="Vitt U."/>
            <person name="Wingrove J."/>
            <person name="Camara F."/>
            <person name="Mar Alba M."/>
            <person name="Abril J.F."/>
            <person name="Guigo R."/>
            <person name="Smit A."/>
            <person name="Dubchak I."/>
            <person name="Rubin E.M."/>
            <person name="Couronne O."/>
            <person name="Poliakov A."/>
            <person name="Huebner N."/>
            <person name="Ganten D."/>
            <person name="Goesele C."/>
            <person name="Hummel O."/>
            <person name="Kreitler T."/>
            <person name="Lee Y.-A."/>
            <person name="Monti J."/>
            <person name="Schulz H."/>
            <person name="Zimdahl H."/>
            <person name="Himmelbauer H."/>
            <person name="Lehrach H."/>
            <person name="Jacob H.J."/>
            <person name="Bromberg S."/>
            <person name="Gullings-Handley J."/>
            <person name="Jensen-Seaman M.I."/>
            <person name="Kwitek A.E."/>
            <person name="Lazar J."/>
            <person name="Pasko D."/>
            <person name="Tonellato P.J."/>
            <person name="Twigger S."/>
            <person name="Ponting C.P."/>
            <person name="Duarte J.M."/>
            <person name="Rice S."/>
            <person name="Goodstadt L."/>
            <person name="Beatson S.A."/>
            <person name="Emes R.D."/>
            <person name="Winter E.E."/>
            <person name="Webber C."/>
            <person name="Brandt P."/>
            <person name="Nyakatura G."/>
            <person name="Adetobi M."/>
            <person name="Chiaromonte F."/>
            <person name="Elnitski L."/>
            <person name="Eswara P."/>
            <person name="Hardison R.C."/>
            <person name="Hou M."/>
            <person name="Kolbe D."/>
            <person name="Makova K."/>
            <person name="Miller W."/>
            <person name="Nekrutenko A."/>
            <person name="Riemer C."/>
            <person name="Schwartz S."/>
            <person name="Taylor J."/>
            <person name="Yang S."/>
            <person name="Zhang Y."/>
            <person name="Lindpaintner K."/>
            <person name="Andrews T.D."/>
            <person name="Caccamo M."/>
            <person name="Clamp M."/>
            <person name="Clarke L."/>
            <person name="Curwen V."/>
            <person name="Durbin R.M."/>
            <person name="Eyras E."/>
            <person name="Searle S.M."/>
            <person name="Cooper G.M."/>
            <person name="Batzoglou S."/>
            <person name="Brudno M."/>
            <person name="Sidow A."/>
            <person name="Stone E.A."/>
            <person name="Payseur B.A."/>
            <person name="Bourque G."/>
            <person name="Lopez-Otin C."/>
            <person name="Puente X.S."/>
            <person name="Chakrabarti K."/>
            <person name="Chatterji S."/>
            <person name="Dewey C."/>
            <person name="Pachter L."/>
            <person name="Bray N."/>
            <person name="Yap V.B."/>
            <person name="Caspi A."/>
            <person name="Tesler G."/>
            <person name="Pevzner P.A."/>
            <person name="Haussler D."/>
            <person name="Roskin K.M."/>
            <person name="Baertsch R."/>
            <person name="Clawson H."/>
            <person name="Furey T.S."/>
            <person name="Hinrichs A.S."/>
            <person name="Karolchik D."/>
            <person name="Kent W.J."/>
            <person name="Rosenbloom K.R."/>
            <person name="Trumbower H."/>
            <person name="Weirauch M."/>
            <person name="Cooper D.N."/>
            <person name="Stenson P.D."/>
            <person name="Ma B."/>
            <person name="Brent M."/>
            <person name="Arumugam M."/>
            <person name="Shteynberg D."/>
            <person name="Copley R.R."/>
            <person name="Taylor M.S."/>
            <person name="Riethman H."/>
            <person name="Mudunuri U."/>
            <person name="Peterson J."/>
            <person name="Guyer M."/>
            <person name="Felsenfeld A."/>
            <person name="Old S."/>
            <person name="Mockrin S."/>
            <person name="Collins F.S."/>
        </authorList>
    </citation>
    <scope>NUCLEOTIDE SEQUENCE [LARGE SCALE GENOMIC DNA]</scope>
    <source>
        <strain>Brown Norway</strain>
    </source>
</reference>
<reference key="3">
    <citation type="submission" date="2005-09" db="EMBL/GenBank/DDBJ databases">
        <authorList>
            <person name="Mural R.J."/>
            <person name="Adams M.D."/>
            <person name="Myers E.W."/>
            <person name="Smith H.O."/>
            <person name="Venter J.C."/>
        </authorList>
    </citation>
    <scope>NUCLEOTIDE SEQUENCE [LARGE SCALE GENOMIC DNA]</scope>
    <source>
        <strain>Brown Norway</strain>
    </source>
</reference>
<reference key="4">
    <citation type="journal article" date="1996" name="J. Neurosci.">
        <title>Cloning of P2X5 and P2X6 receptors and the distribution and properties of an extended family of ATP-gated ion channels.</title>
        <authorList>
            <person name="Collo G."/>
            <person name="Kawashima E."/>
            <person name="Pich E."/>
            <person name="Neidhart S."/>
            <person name="North R.A."/>
            <person name="Surprenant A."/>
            <person name="Buell G.N."/>
        </authorList>
    </citation>
    <scope>NUCLEOTIDE SEQUENCE [MRNA] OF 7-389</scope>
    <source>
        <tissue>Cervical ganglion</tissue>
    </source>
</reference>
<reference key="5">
    <citation type="journal article" date="2002" name="J. Neurosci.">
        <title>P2X receptor trafficking in neurons is subunit specific.</title>
        <authorList>
            <person name="Bobanovic L.K."/>
            <person name="Royle S.J."/>
            <person name="Murrell-Lagnado R.D."/>
        </authorList>
    </citation>
    <scope>SUBCELLULAR LOCATION</scope>
    <scope>SUBUNIT</scope>
    <scope>INTERACTION WITH P2RX4</scope>
</reference>
<reference key="6">
    <citation type="journal article" date="1999" name="J. Biol. Chem.">
        <title>Hetero-oligomeric assembly of P2X receptor subunits. Specificities exist with regard to possible partners.</title>
        <authorList>
            <person name="Torres G.E."/>
            <person name="Egan T.M."/>
            <person name="Voigt M.M."/>
        </authorList>
    </citation>
    <scope>FUNCTION</scope>
    <scope>SUBUNIT</scope>
</reference>
<reference key="7">
    <citation type="journal article" date="2000" name="J. Neurosci.">
        <title>Coexpression of rat P2X2 and P2X6 subunits in Xenopus oocytes.</title>
        <authorList>
            <person name="King B.F."/>
            <person name="Townsend-Nicholson A."/>
            <person name="Wildman S.S."/>
            <person name="Thomas T."/>
            <person name="Spyer K.M."/>
            <person name="Burnstock G."/>
        </authorList>
    </citation>
    <scope>FUNCTION</scope>
    <scope>SUBUNIT</scope>
</reference>
<reference key="8">
    <citation type="journal article" date="2004" name="Mol. Pharmacol.">
        <title>Functional regulation of P2X6 receptors by N-linked glycosylation: identification of a novel alpha beta-methylene ATP-sensitive phenotype.</title>
        <authorList>
            <person name="Jones C.A."/>
            <person name="Vial C."/>
            <person name="Sellers L.A."/>
            <person name="Humphrey P.P."/>
            <person name="Evans R.J."/>
            <person name="Chessell I.P."/>
        </authorList>
    </citation>
    <scope>GLYCOSYLATION</scope>
    <scope>SUBCELLULAR LOCATION</scope>
</reference>
<reference key="9">
    <citation type="journal article" date="2005" name="J. Biol. Chem.">
        <title>Atomic force microscopy imaging demonstrates that P2X2 receptors are trimers but that P2X6 receptor subunits do not oligomerize.</title>
        <authorList>
            <person name="Barrera N.P."/>
            <person name="Ormond S.J."/>
            <person name="Henderson R.M."/>
            <person name="Murrell-Lagnado R.D."/>
            <person name="Edwardson J.M."/>
        </authorList>
    </citation>
    <scope>SUBUNIT</scope>
</reference>
<reference key="10">
    <citation type="journal article" date="2006" name="Mol. Pharmacol.">
        <title>An uncharged region within the N terminus of the P2X6 receptor inhibits its assembly and exit from the endoplasmic reticulum.</title>
        <authorList>
            <person name="Ormond S.J."/>
            <person name="Barrera N.P."/>
            <person name="Qureshi O.S."/>
            <person name="Henderson R.M."/>
            <person name="Edwardson J.M."/>
            <person name="Murrell-Lagnado R.D."/>
        </authorList>
    </citation>
    <scope>FUNCTION</scope>
    <scope>SUBCELLULAR LOCATION</scope>
    <scope>SUBUNIT</scope>
    <scope>DOMAIN</scope>
    <scope>MUTAGENESIS OF SER-13 AND SER-21</scope>
</reference>
<reference key="11">
    <citation type="journal article" date="2007" name="Biophys. J.">
        <title>The stoichiometry of P2X2/6 receptor heteromers depends on relative subunit expression levels.</title>
        <authorList>
            <person name="Barrera N.P."/>
            <person name="Henderson R.M."/>
            <person name="Murrell-Lagnado R.D."/>
            <person name="Edwardson J.M."/>
        </authorList>
    </citation>
    <scope>INTERACTION WITH P2RX2</scope>
</reference>
<reference key="12">
    <citation type="journal article" date="2014" name="FEBS Lett.">
        <title>Identification of P2X2/P2X4/P2X6 heterotrimeric receptors using atomic force microscopy (AFM) imaging.</title>
        <authorList>
            <person name="Antonio L.S."/>
            <person name="Stewart A.P."/>
            <person name="Varanda W.A."/>
            <person name="Edwardson J.M."/>
        </authorList>
    </citation>
    <scope>SUBUNIT</scope>
</reference>
<protein>
    <recommendedName>
        <fullName>P2X purinoceptor 6</fullName>
        <shortName>P2X6</shortName>
    </recommendedName>
    <alternativeName>
        <fullName>ATP receptor</fullName>
    </alternativeName>
    <alternativeName>
        <fullName>P2XM</fullName>
    </alternativeName>
    <alternativeName>
        <fullName>Purinergic receptor</fullName>
    </alternativeName>
    <alternativeName>
        <fullName>Purinergic receptor P2X-like 1</fullName>
    </alternativeName>
</protein>
<name>P2RX6_RAT</name>